<keyword id="KW-0963">Cytoplasm</keyword>
<keyword id="KW-0238">DNA-binding</keyword>
<keyword id="KW-1185">Reference proteome</keyword>
<proteinExistence type="inferred from homology"/>
<organism>
    <name type="scientific">Alcanivorax borkumensis (strain ATCC 700651 / DSM 11573 / NCIMB 13689 / SK2)</name>
    <dbReference type="NCBI Taxonomy" id="393595"/>
    <lineage>
        <taxon>Bacteria</taxon>
        <taxon>Pseudomonadati</taxon>
        <taxon>Pseudomonadota</taxon>
        <taxon>Gammaproteobacteria</taxon>
        <taxon>Oceanospirillales</taxon>
        <taxon>Alcanivoracaceae</taxon>
        <taxon>Alcanivorax</taxon>
    </lineage>
</organism>
<reference key="1">
    <citation type="journal article" date="2006" name="Nat. Biotechnol.">
        <title>Genome sequence of the ubiquitous hydrocarbon-degrading marine bacterium Alcanivorax borkumensis.</title>
        <authorList>
            <person name="Schneiker S."/>
            <person name="Martins dos Santos V.A.P."/>
            <person name="Bartels D."/>
            <person name="Bekel T."/>
            <person name="Brecht M."/>
            <person name="Buhrmester J."/>
            <person name="Chernikova T.N."/>
            <person name="Denaro R."/>
            <person name="Ferrer M."/>
            <person name="Gertler C."/>
            <person name="Goesmann A."/>
            <person name="Golyshina O.V."/>
            <person name="Kaminski F."/>
            <person name="Khachane A.N."/>
            <person name="Lang S."/>
            <person name="Linke B."/>
            <person name="McHardy A.C."/>
            <person name="Meyer F."/>
            <person name="Nechitaylo T."/>
            <person name="Puehler A."/>
            <person name="Regenhardt D."/>
            <person name="Rupp O."/>
            <person name="Sabirova J.S."/>
            <person name="Selbitschka W."/>
            <person name="Yakimov M.M."/>
            <person name="Timmis K.N."/>
            <person name="Vorhoelter F.-J."/>
            <person name="Weidner S."/>
            <person name="Kaiser O."/>
            <person name="Golyshin P.N."/>
        </authorList>
    </citation>
    <scope>NUCLEOTIDE SEQUENCE [LARGE SCALE GENOMIC DNA]</scope>
    <source>
        <strain>ATCC 700651 / DSM 11573 / NCIMB 13689 / SK2</strain>
    </source>
</reference>
<dbReference type="EMBL" id="AM286690">
    <property type="protein sequence ID" value="CAL17222.1"/>
    <property type="molecule type" value="Genomic_DNA"/>
</dbReference>
<dbReference type="RefSeq" id="WP_011589055.1">
    <property type="nucleotide sequence ID" value="NC_008260.1"/>
</dbReference>
<dbReference type="SMR" id="Q0VNM6"/>
<dbReference type="STRING" id="393595.ABO_1774"/>
<dbReference type="KEGG" id="abo:ABO_1774"/>
<dbReference type="eggNOG" id="COG0718">
    <property type="taxonomic scope" value="Bacteria"/>
</dbReference>
<dbReference type="HOGENOM" id="CLU_140930_0_0_6"/>
<dbReference type="OrthoDB" id="9808738at2"/>
<dbReference type="Proteomes" id="UP000008871">
    <property type="component" value="Chromosome"/>
</dbReference>
<dbReference type="GO" id="GO:0043590">
    <property type="term" value="C:bacterial nucleoid"/>
    <property type="evidence" value="ECO:0007669"/>
    <property type="project" value="UniProtKB-UniRule"/>
</dbReference>
<dbReference type="GO" id="GO:0005829">
    <property type="term" value="C:cytosol"/>
    <property type="evidence" value="ECO:0007669"/>
    <property type="project" value="TreeGrafter"/>
</dbReference>
<dbReference type="GO" id="GO:0003677">
    <property type="term" value="F:DNA binding"/>
    <property type="evidence" value="ECO:0007669"/>
    <property type="project" value="UniProtKB-UniRule"/>
</dbReference>
<dbReference type="Gene3D" id="3.30.1310.10">
    <property type="entry name" value="Nucleoid-associated protein YbaB-like domain"/>
    <property type="match status" value="1"/>
</dbReference>
<dbReference type="HAMAP" id="MF_00274">
    <property type="entry name" value="DNA_YbaB_EbfC"/>
    <property type="match status" value="1"/>
</dbReference>
<dbReference type="InterPro" id="IPR036894">
    <property type="entry name" value="YbaB-like_sf"/>
</dbReference>
<dbReference type="InterPro" id="IPR004401">
    <property type="entry name" value="YbaB/EbfC"/>
</dbReference>
<dbReference type="NCBIfam" id="TIGR00103">
    <property type="entry name" value="DNA_YbaB_EbfC"/>
    <property type="match status" value="1"/>
</dbReference>
<dbReference type="PANTHER" id="PTHR33449">
    <property type="entry name" value="NUCLEOID-ASSOCIATED PROTEIN YBAB"/>
    <property type="match status" value="1"/>
</dbReference>
<dbReference type="PANTHER" id="PTHR33449:SF1">
    <property type="entry name" value="NUCLEOID-ASSOCIATED PROTEIN YBAB"/>
    <property type="match status" value="1"/>
</dbReference>
<dbReference type="Pfam" id="PF02575">
    <property type="entry name" value="YbaB_DNA_bd"/>
    <property type="match status" value="1"/>
</dbReference>
<dbReference type="PIRSF" id="PIRSF004555">
    <property type="entry name" value="UCP004555"/>
    <property type="match status" value="1"/>
</dbReference>
<dbReference type="SUPFAM" id="SSF82607">
    <property type="entry name" value="YbaB-like"/>
    <property type="match status" value="1"/>
</dbReference>
<sequence length="105" mass="11538">MDFDINNLMQQAQAMQEKMKKMQDEAANAEVVGESGAGLVKVTMNGRHDVKGVDIDPSLMSEDKELLEDLLAAAVNDAVRRIEKQQQDSMQNMAGGFPFPPGFKP</sequence>
<evidence type="ECO:0000255" key="1">
    <source>
        <dbReference type="HAMAP-Rule" id="MF_00274"/>
    </source>
</evidence>
<evidence type="ECO:0000256" key="2">
    <source>
        <dbReference type="SAM" id="MobiDB-lite"/>
    </source>
</evidence>
<accession>Q0VNM6</accession>
<protein>
    <recommendedName>
        <fullName evidence="1">Nucleoid-associated protein ABO_1774</fullName>
    </recommendedName>
</protein>
<gene>
    <name type="ordered locus">ABO_1774</name>
</gene>
<comment type="function">
    <text evidence="1">Binds to DNA and alters its conformation. May be involved in regulation of gene expression, nucleoid organization and DNA protection.</text>
</comment>
<comment type="subunit">
    <text evidence="1">Homodimer.</text>
</comment>
<comment type="subcellular location">
    <subcellularLocation>
        <location evidence="1">Cytoplasm</location>
        <location evidence="1">Nucleoid</location>
    </subcellularLocation>
</comment>
<comment type="similarity">
    <text evidence="1">Belongs to the YbaB/EbfC family.</text>
</comment>
<feature type="chain" id="PRO_1000071911" description="Nucleoid-associated protein ABO_1774">
    <location>
        <begin position="1"/>
        <end position="105"/>
    </location>
</feature>
<feature type="region of interest" description="Disordered" evidence="2">
    <location>
        <begin position="85"/>
        <end position="105"/>
    </location>
</feature>
<name>Y1774_ALCBS</name>